<sequence>MYNFLEFFFFFITYTLFKSTFVQGKSSFPGHDVCKFEDQNFQTEFFLNVLKGDKLQNLKQEYEQYKKQSTLYTGFVIEKQYEYQVAPLQINNFLQVTFCKGGKPIWNHILPFQKDLDWAEPLCIPAQEDDTISQNSSVCFKFARVQKYTQRNVTLYFPNKFVGFVFVCNSSKTHPPTQNNFETIPLTPIISDDIRDYKISWSIKGRITKVVPYLHSLSIPMSKYEMLIHSDKNISNELEYKSLTSEFWKSYKNLRKFKNKEMSWINEINPMEQYDSSGNENVPNFHEKLDRTINRIAQNIERPHDALIRAIAAHNRNSNSGNITRRKYLRRKISKMLKNKIPLKN</sequence>
<accession>P53122</accession>
<accession>D6VU11</accession>
<proteinExistence type="predicted"/>
<reference key="1">
    <citation type="journal article" date="1996" name="Yeast">
        <title>Sequence analysis of a 14.6 kb DNA fragment of Saccharomyces cerevisiae chromosome VII reveals SEC27, SSM1b, a putative S-adenosylmethionine-dependent enzyme and six new open reading frames.</title>
        <authorList>
            <person name="Escribano V."/>
            <person name="Eraso P."/>
            <person name="Portillo F."/>
            <person name="Mazon M.J."/>
        </authorList>
    </citation>
    <scope>NUCLEOTIDE SEQUENCE [GENOMIC DNA]</scope>
    <source>
        <strain>ATCC 96604 / S288c / FY1679</strain>
    </source>
</reference>
<reference key="2">
    <citation type="journal article" date="1997" name="Nature">
        <title>The nucleotide sequence of Saccharomyces cerevisiae chromosome VII.</title>
        <authorList>
            <person name="Tettelin H."/>
            <person name="Agostoni-Carbone M.L."/>
            <person name="Albermann K."/>
            <person name="Albers M."/>
            <person name="Arroyo J."/>
            <person name="Backes U."/>
            <person name="Barreiros T."/>
            <person name="Bertani I."/>
            <person name="Bjourson A.J."/>
            <person name="Brueckner M."/>
            <person name="Bruschi C.V."/>
            <person name="Carignani G."/>
            <person name="Castagnoli L."/>
            <person name="Cerdan E."/>
            <person name="Clemente M.L."/>
            <person name="Coblenz A."/>
            <person name="Coglievina M."/>
            <person name="Coissac E."/>
            <person name="Defoor E."/>
            <person name="Del Bino S."/>
            <person name="Delius H."/>
            <person name="Delneri D."/>
            <person name="de Wergifosse P."/>
            <person name="Dujon B."/>
            <person name="Durand P."/>
            <person name="Entian K.-D."/>
            <person name="Eraso P."/>
            <person name="Escribano V."/>
            <person name="Fabiani L."/>
            <person name="Fartmann B."/>
            <person name="Feroli F."/>
            <person name="Feuermann M."/>
            <person name="Frontali L."/>
            <person name="Garcia-Gonzalez M."/>
            <person name="Garcia-Saez M.I."/>
            <person name="Goffeau A."/>
            <person name="Guerreiro P."/>
            <person name="Hani J."/>
            <person name="Hansen M."/>
            <person name="Hebling U."/>
            <person name="Hernandez K."/>
            <person name="Heumann K."/>
            <person name="Hilger F."/>
            <person name="Hofmann B."/>
            <person name="Indge K.J."/>
            <person name="James C.M."/>
            <person name="Klima R."/>
            <person name="Koetter P."/>
            <person name="Kramer B."/>
            <person name="Kramer W."/>
            <person name="Lauquin G."/>
            <person name="Leuther H."/>
            <person name="Louis E.J."/>
            <person name="Maillier E."/>
            <person name="Marconi A."/>
            <person name="Martegani E."/>
            <person name="Mazon M.J."/>
            <person name="Mazzoni C."/>
            <person name="McReynolds A.D.K."/>
            <person name="Melchioretto P."/>
            <person name="Mewes H.-W."/>
            <person name="Minenkova O."/>
            <person name="Mueller-Auer S."/>
            <person name="Nawrocki A."/>
            <person name="Netter P."/>
            <person name="Neu R."/>
            <person name="Nombela C."/>
            <person name="Oliver S.G."/>
            <person name="Panzeri L."/>
            <person name="Paoluzi S."/>
            <person name="Plevani P."/>
            <person name="Portetelle D."/>
            <person name="Portillo F."/>
            <person name="Potier S."/>
            <person name="Purnelle B."/>
            <person name="Rieger M."/>
            <person name="Riles L."/>
            <person name="Rinaldi T."/>
            <person name="Robben J."/>
            <person name="Rodrigues-Pousada C."/>
            <person name="Rodriguez-Belmonte E."/>
            <person name="Rodriguez-Torres A.M."/>
            <person name="Rose M."/>
            <person name="Ruzzi M."/>
            <person name="Saliola M."/>
            <person name="Sanchez-Perez M."/>
            <person name="Schaefer B."/>
            <person name="Schaefer M."/>
            <person name="Scharfe M."/>
            <person name="Schmidheini T."/>
            <person name="Schreer A."/>
            <person name="Skala J."/>
            <person name="Souciet J.-L."/>
            <person name="Steensma H.Y."/>
            <person name="Talla E."/>
            <person name="Thierry A."/>
            <person name="Vandenbol M."/>
            <person name="van der Aart Q.J.M."/>
            <person name="Van Dyck L."/>
            <person name="Vanoni M."/>
            <person name="Verhasselt P."/>
            <person name="Voet M."/>
            <person name="Volckaert G."/>
            <person name="Wambutt R."/>
            <person name="Watson M.D."/>
            <person name="Weber N."/>
            <person name="Wedler E."/>
            <person name="Wedler H."/>
            <person name="Wipfli P."/>
            <person name="Wolf K."/>
            <person name="Wright L.F."/>
            <person name="Zaccaria P."/>
            <person name="Zimmermann M."/>
            <person name="Zollner A."/>
            <person name="Kleine K."/>
        </authorList>
    </citation>
    <scope>NUCLEOTIDE SEQUENCE [LARGE SCALE GENOMIC DNA]</scope>
    <source>
        <strain>ATCC 204508 / S288c</strain>
    </source>
</reference>
<reference key="3">
    <citation type="journal article" date="2014" name="G3 (Bethesda)">
        <title>The reference genome sequence of Saccharomyces cerevisiae: Then and now.</title>
        <authorList>
            <person name="Engel S.R."/>
            <person name="Dietrich F.S."/>
            <person name="Fisk D.G."/>
            <person name="Binkley G."/>
            <person name="Balakrishnan R."/>
            <person name="Costanzo M.C."/>
            <person name="Dwight S.S."/>
            <person name="Hitz B.C."/>
            <person name="Karra K."/>
            <person name="Nash R.S."/>
            <person name="Weng S."/>
            <person name="Wong E.D."/>
            <person name="Lloyd P."/>
            <person name="Skrzypek M.S."/>
            <person name="Miyasato S.R."/>
            <person name="Simison M."/>
            <person name="Cherry J.M."/>
        </authorList>
    </citation>
    <scope>GENOME REANNOTATION</scope>
    <source>
        <strain>ATCC 204508 / S288c</strain>
    </source>
</reference>
<reference key="4">
    <citation type="journal article" date="2007" name="Genome Res.">
        <title>Approaching a complete repository of sequence-verified protein-encoding clones for Saccharomyces cerevisiae.</title>
        <authorList>
            <person name="Hu Y."/>
            <person name="Rolfs A."/>
            <person name="Bhullar B."/>
            <person name="Murthy T.V.S."/>
            <person name="Zhu C."/>
            <person name="Berger M.F."/>
            <person name="Camargo A.A."/>
            <person name="Kelley F."/>
            <person name="McCarron S."/>
            <person name="Jepson D."/>
            <person name="Richardson A."/>
            <person name="Raphael J."/>
            <person name="Moreira D."/>
            <person name="Taycher E."/>
            <person name="Zuo D."/>
            <person name="Mohr S."/>
            <person name="Kane M.F."/>
            <person name="Williamson J."/>
            <person name="Simpson A.J.G."/>
            <person name="Bulyk M.L."/>
            <person name="Harlow E."/>
            <person name="Marsischky G."/>
            <person name="Kolodner R.D."/>
            <person name="LaBaer J."/>
        </authorList>
    </citation>
    <scope>NUCLEOTIDE SEQUENCE [GENOMIC DNA]</scope>
    <source>
        <strain>ATCC 204508 / S288c</strain>
    </source>
</reference>
<dbReference type="EMBL" id="X92670">
    <property type="protein sequence ID" value="CAA63358.1"/>
    <property type="molecule type" value="Genomic_DNA"/>
</dbReference>
<dbReference type="EMBL" id="Z72660">
    <property type="protein sequence ID" value="CAA96849.1"/>
    <property type="molecule type" value="Genomic_DNA"/>
</dbReference>
<dbReference type="EMBL" id="AY558501">
    <property type="protein sequence ID" value="AAS56827.1"/>
    <property type="molecule type" value="Genomic_DNA"/>
</dbReference>
<dbReference type="EMBL" id="BK006941">
    <property type="protein sequence ID" value="DAA07972.1"/>
    <property type="molecule type" value="Genomic_DNA"/>
</dbReference>
<dbReference type="PIR" id="S64151">
    <property type="entry name" value="S64151"/>
</dbReference>
<dbReference type="RefSeq" id="NP_011377.1">
    <property type="nucleotide sequence ID" value="NM_001181003.1"/>
</dbReference>
<dbReference type="SMR" id="P53122"/>
<dbReference type="BioGRID" id="33114">
    <property type="interactions" value="17"/>
</dbReference>
<dbReference type="DIP" id="DIP-5531N"/>
<dbReference type="FunCoup" id="P53122">
    <property type="interactions" value="25"/>
</dbReference>
<dbReference type="IntAct" id="P53122">
    <property type="interactions" value="1"/>
</dbReference>
<dbReference type="STRING" id="4932.YGL138C"/>
<dbReference type="PaxDb" id="4932-YGL138C"/>
<dbReference type="EnsemblFungi" id="YGL138C_mRNA">
    <property type="protein sequence ID" value="YGL138C"/>
    <property type="gene ID" value="YGL138C"/>
</dbReference>
<dbReference type="GeneID" id="852739"/>
<dbReference type="KEGG" id="sce:YGL138C"/>
<dbReference type="AGR" id="SGD:S000003106"/>
<dbReference type="SGD" id="S000003106">
    <property type="gene designation" value="YGL138C"/>
</dbReference>
<dbReference type="VEuPathDB" id="FungiDB:YGL138C"/>
<dbReference type="eggNOG" id="ENOG502RY5P">
    <property type="taxonomic scope" value="Eukaryota"/>
</dbReference>
<dbReference type="HOGENOM" id="CLU_804495_0_0_1"/>
<dbReference type="InParanoid" id="P53122"/>
<dbReference type="OMA" id="RDYKISW"/>
<dbReference type="OrthoDB" id="4024574at2759"/>
<dbReference type="BioCyc" id="YEAST:G3O-30633-MONOMER"/>
<dbReference type="BioGRID-ORCS" id="852739">
    <property type="hits" value="0 hits in 10 CRISPR screens"/>
</dbReference>
<dbReference type="PRO" id="PR:P53122"/>
<dbReference type="Proteomes" id="UP000002311">
    <property type="component" value="Chromosome VII"/>
</dbReference>
<dbReference type="RNAct" id="P53122">
    <property type="molecule type" value="protein"/>
</dbReference>
<dbReference type="GO" id="GO:0005628">
    <property type="term" value="C:prospore membrane"/>
    <property type="evidence" value="ECO:0007005"/>
    <property type="project" value="SGD"/>
</dbReference>
<name>YGN8_YEAST</name>
<organism>
    <name type="scientific">Saccharomyces cerevisiae (strain ATCC 204508 / S288c)</name>
    <name type="common">Baker's yeast</name>
    <dbReference type="NCBI Taxonomy" id="559292"/>
    <lineage>
        <taxon>Eukaryota</taxon>
        <taxon>Fungi</taxon>
        <taxon>Dikarya</taxon>
        <taxon>Ascomycota</taxon>
        <taxon>Saccharomycotina</taxon>
        <taxon>Saccharomycetes</taxon>
        <taxon>Saccharomycetales</taxon>
        <taxon>Saccharomycetaceae</taxon>
        <taxon>Saccharomyces</taxon>
    </lineage>
</organism>
<protein>
    <recommendedName>
        <fullName>Uncharacterized protein YGL138C</fullName>
    </recommendedName>
</protein>
<feature type="chain" id="PRO_0000202739" description="Uncharacterized protein YGL138C">
    <location>
        <begin position="1"/>
        <end position="345"/>
    </location>
</feature>
<keyword id="KW-1185">Reference proteome</keyword>
<gene>
    <name type="ordered locus">YGL138C</name>
    <name type="ORF">G2816</name>
</gene>